<comment type="function">
    <text evidence="1">Transfers the gamma-phosphate of ATP to the 4'-position of a tetraacyldisaccharide 1-phosphate intermediate (termed DS-1-P) to form tetraacyldisaccharide 1,4'-bis-phosphate (lipid IVA).</text>
</comment>
<comment type="catalytic activity">
    <reaction evidence="1">
        <text>a lipid A disaccharide + ATP = a lipid IVA + ADP + H(+)</text>
        <dbReference type="Rhea" id="RHEA:67840"/>
        <dbReference type="ChEBI" id="CHEBI:15378"/>
        <dbReference type="ChEBI" id="CHEBI:30616"/>
        <dbReference type="ChEBI" id="CHEBI:176343"/>
        <dbReference type="ChEBI" id="CHEBI:176425"/>
        <dbReference type="ChEBI" id="CHEBI:456216"/>
        <dbReference type="EC" id="2.7.1.130"/>
    </reaction>
</comment>
<comment type="pathway">
    <text evidence="1">Glycolipid biosynthesis; lipid IV(A) biosynthesis; lipid IV(A) from (3R)-3-hydroxytetradecanoyl-[acyl-carrier-protein] and UDP-N-acetyl-alpha-D-glucosamine: step 6/6.</text>
</comment>
<comment type="similarity">
    <text evidence="1">Belongs to the LpxK family.</text>
</comment>
<reference key="1">
    <citation type="journal article" date="2005" name="Proc. Natl. Acad. Sci. U.S.A.">
        <title>Comparison of the complete genome sequences of Pseudomonas syringae pv. syringae B728a and pv. tomato DC3000.</title>
        <authorList>
            <person name="Feil H."/>
            <person name="Feil W.S."/>
            <person name="Chain P."/>
            <person name="Larimer F."/>
            <person name="Dibartolo G."/>
            <person name="Copeland A."/>
            <person name="Lykidis A."/>
            <person name="Trong S."/>
            <person name="Nolan M."/>
            <person name="Goltsman E."/>
            <person name="Thiel J."/>
            <person name="Malfatti S."/>
            <person name="Loper J.E."/>
            <person name="Lapidus A."/>
            <person name="Detter J.C."/>
            <person name="Land M."/>
            <person name="Richardson P.M."/>
            <person name="Kyrpides N.C."/>
            <person name="Ivanova N."/>
            <person name="Lindow S.E."/>
        </authorList>
    </citation>
    <scope>NUCLEOTIDE SEQUENCE [LARGE SCALE GENOMIC DNA]</scope>
    <source>
        <strain>B728a</strain>
    </source>
</reference>
<sequence length="331" mass="36580">MAFTDRLLDAWYKGHPALALLRPLEGLYRRVVERKRARFLAGEGDIYRAPVPVIVVGNITVGGTGKTPLILWMIEHCRRRGLRVGVVSRGYGAKPPSLPWRVLPDQSASEAGDEPLLIVQRCGVPLMIDPDRSRAVQALLAAEPLDLILSDDGLQHYRLARDLELVLIDAARGLGNRRCLPAGPLREPVERLSSVDALLYNGAMADRGDGYAFRLKPSALINLRSGERQPVDYFPAGQALHAVAGIGNPRRFFNTLEGLHWRPVPHAFADHAVYSAEALTFTPALPLVMTEKDAVKCRAFAADDWWYLAVDAVPSDAFVGWFDQQLLRLSP</sequence>
<protein>
    <recommendedName>
        <fullName evidence="1">Tetraacyldisaccharide 4'-kinase</fullName>
        <ecNumber evidence="1">2.7.1.130</ecNumber>
    </recommendedName>
    <alternativeName>
        <fullName evidence="1">Lipid A 4'-kinase</fullName>
    </alternativeName>
</protein>
<organism>
    <name type="scientific">Pseudomonas syringae pv. syringae (strain B728a)</name>
    <dbReference type="NCBI Taxonomy" id="205918"/>
    <lineage>
        <taxon>Bacteria</taxon>
        <taxon>Pseudomonadati</taxon>
        <taxon>Pseudomonadota</taxon>
        <taxon>Gammaproteobacteria</taxon>
        <taxon>Pseudomonadales</taxon>
        <taxon>Pseudomonadaceae</taxon>
        <taxon>Pseudomonas</taxon>
        <taxon>Pseudomonas syringae</taxon>
    </lineage>
</organism>
<evidence type="ECO:0000255" key="1">
    <source>
        <dbReference type="HAMAP-Rule" id="MF_00409"/>
    </source>
</evidence>
<keyword id="KW-0067">ATP-binding</keyword>
<keyword id="KW-0418">Kinase</keyword>
<keyword id="KW-0441">Lipid A biosynthesis</keyword>
<keyword id="KW-0444">Lipid biosynthesis</keyword>
<keyword id="KW-0443">Lipid metabolism</keyword>
<keyword id="KW-0547">Nucleotide-binding</keyword>
<keyword id="KW-0808">Transferase</keyword>
<gene>
    <name evidence="1" type="primary">lpxK</name>
    <name type="ordered locus">Psyr_1635</name>
</gene>
<feature type="chain" id="PRO_0000229972" description="Tetraacyldisaccharide 4'-kinase">
    <location>
        <begin position="1"/>
        <end position="331"/>
    </location>
</feature>
<feature type="binding site" evidence="1">
    <location>
        <begin position="60"/>
        <end position="67"/>
    </location>
    <ligand>
        <name>ATP</name>
        <dbReference type="ChEBI" id="CHEBI:30616"/>
    </ligand>
</feature>
<name>LPXK_PSEU2</name>
<accession>Q4ZVY9</accession>
<dbReference type="EC" id="2.7.1.130" evidence="1"/>
<dbReference type="EMBL" id="CP000075">
    <property type="protein sequence ID" value="AAY36683.1"/>
    <property type="molecule type" value="Genomic_DNA"/>
</dbReference>
<dbReference type="RefSeq" id="WP_011267144.1">
    <property type="nucleotide sequence ID" value="NC_007005.1"/>
</dbReference>
<dbReference type="RefSeq" id="YP_234721.1">
    <property type="nucleotide sequence ID" value="NC_007005.1"/>
</dbReference>
<dbReference type="SMR" id="Q4ZVY9"/>
<dbReference type="STRING" id="205918.Psyr_1635"/>
<dbReference type="KEGG" id="psb:Psyr_1635"/>
<dbReference type="PATRIC" id="fig|205918.7.peg.1671"/>
<dbReference type="eggNOG" id="COG1663">
    <property type="taxonomic scope" value="Bacteria"/>
</dbReference>
<dbReference type="HOGENOM" id="CLU_038816_2_0_6"/>
<dbReference type="OrthoDB" id="9766423at2"/>
<dbReference type="UniPathway" id="UPA00359">
    <property type="reaction ID" value="UER00482"/>
</dbReference>
<dbReference type="Proteomes" id="UP000000426">
    <property type="component" value="Chromosome"/>
</dbReference>
<dbReference type="GO" id="GO:0005886">
    <property type="term" value="C:plasma membrane"/>
    <property type="evidence" value="ECO:0007669"/>
    <property type="project" value="TreeGrafter"/>
</dbReference>
<dbReference type="GO" id="GO:0005524">
    <property type="term" value="F:ATP binding"/>
    <property type="evidence" value="ECO:0007669"/>
    <property type="project" value="UniProtKB-UniRule"/>
</dbReference>
<dbReference type="GO" id="GO:0009029">
    <property type="term" value="F:tetraacyldisaccharide 4'-kinase activity"/>
    <property type="evidence" value="ECO:0007669"/>
    <property type="project" value="UniProtKB-UniRule"/>
</dbReference>
<dbReference type="GO" id="GO:0009245">
    <property type="term" value="P:lipid A biosynthetic process"/>
    <property type="evidence" value="ECO:0007669"/>
    <property type="project" value="UniProtKB-UniRule"/>
</dbReference>
<dbReference type="GO" id="GO:0009244">
    <property type="term" value="P:lipopolysaccharide core region biosynthetic process"/>
    <property type="evidence" value="ECO:0007669"/>
    <property type="project" value="TreeGrafter"/>
</dbReference>
<dbReference type="HAMAP" id="MF_00409">
    <property type="entry name" value="LpxK"/>
    <property type="match status" value="1"/>
</dbReference>
<dbReference type="InterPro" id="IPR003758">
    <property type="entry name" value="LpxK"/>
</dbReference>
<dbReference type="InterPro" id="IPR027417">
    <property type="entry name" value="P-loop_NTPase"/>
</dbReference>
<dbReference type="NCBIfam" id="TIGR00682">
    <property type="entry name" value="lpxK"/>
    <property type="match status" value="1"/>
</dbReference>
<dbReference type="PANTHER" id="PTHR42724">
    <property type="entry name" value="TETRAACYLDISACCHARIDE 4'-KINASE"/>
    <property type="match status" value="1"/>
</dbReference>
<dbReference type="PANTHER" id="PTHR42724:SF1">
    <property type="entry name" value="TETRAACYLDISACCHARIDE 4'-KINASE, MITOCHONDRIAL-RELATED"/>
    <property type="match status" value="1"/>
</dbReference>
<dbReference type="Pfam" id="PF02606">
    <property type="entry name" value="LpxK"/>
    <property type="match status" value="1"/>
</dbReference>
<dbReference type="SUPFAM" id="SSF52540">
    <property type="entry name" value="P-loop containing nucleoside triphosphate hydrolases"/>
    <property type="match status" value="1"/>
</dbReference>
<proteinExistence type="inferred from homology"/>